<gene>
    <name evidence="6" type="primary">EFCAB9</name>
</gene>
<reference key="1">
    <citation type="journal article" date="2004" name="Nature">
        <title>The DNA sequence and comparative analysis of human chromosome 5.</title>
        <authorList>
            <person name="Schmutz J."/>
            <person name="Martin J."/>
            <person name="Terry A."/>
            <person name="Couronne O."/>
            <person name="Grimwood J."/>
            <person name="Lowry S."/>
            <person name="Gordon L.A."/>
            <person name="Scott D."/>
            <person name="Xie G."/>
            <person name="Huang W."/>
            <person name="Hellsten U."/>
            <person name="Tran-Gyamfi M."/>
            <person name="She X."/>
            <person name="Prabhakar S."/>
            <person name="Aerts A."/>
            <person name="Altherr M."/>
            <person name="Bajorek E."/>
            <person name="Black S."/>
            <person name="Branscomb E."/>
            <person name="Caoile C."/>
            <person name="Challacombe J.F."/>
            <person name="Chan Y.M."/>
            <person name="Denys M."/>
            <person name="Detter J.C."/>
            <person name="Escobar J."/>
            <person name="Flowers D."/>
            <person name="Fotopulos D."/>
            <person name="Glavina T."/>
            <person name="Gomez M."/>
            <person name="Gonzales E."/>
            <person name="Goodstein D."/>
            <person name="Grigoriev I."/>
            <person name="Groza M."/>
            <person name="Hammon N."/>
            <person name="Hawkins T."/>
            <person name="Haydu L."/>
            <person name="Israni S."/>
            <person name="Jett J."/>
            <person name="Kadner K."/>
            <person name="Kimball H."/>
            <person name="Kobayashi A."/>
            <person name="Lopez F."/>
            <person name="Lou Y."/>
            <person name="Martinez D."/>
            <person name="Medina C."/>
            <person name="Morgan J."/>
            <person name="Nandkeshwar R."/>
            <person name="Noonan J.P."/>
            <person name="Pitluck S."/>
            <person name="Pollard M."/>
            <person name="Predki P."/>
            <person name="Priest J."/>
            <person name="Ramirez L."/>
            <person name="Retterer J."/>
            <person name="Rodriguez A."/>
            <person name="Rogers S."/>
            <person name="Salamov A."/>
            <person name="Salazar A."/>
            <person name="Thayer N."/>
            <person name="Tice H."/>
            <person name="Tsai M."/>
            <person name="Ustaszewska A."/>
            <person name="Vo N."/>
            <person name="Wheeler J."/>
            <person name="Wu K."/>
            <person name="Yang J."/>
            <person name="Dickson M."/>
            <person name="Cheng J.-F."/>
            <person name="Eichler E.E."/>
            <person name="Olsen A."/>
            <person name="Pennacchio L.A."/>
            <person name="Rokhsar D.S."/>
            <person name="Richardson P."/>
            <person name="Lucas S.M."/>
            <person name="Myers R.M."/>
            <person name="Rubin E.M."/>
        </authorList>
    </citation>
    <scope>NUCLEOTIDE SEQUENCE [LARGE SCALE GENOMIC DNA]</scope>
</reference>
<feature type="chain" id="PRO_0000340648" description="EF-hand calcium-binding domain-containing protein 9">
    <location>
        <begin position="1"/>
        <end position="197"/>
    </location>
</feature>
<feature type="domain" description="EF-hand 1" evidence="3">
    <location>
        <begin position="59"/>
        <end position="94"/>
    </location>
</feature>
<feature type="domain" description="EF-hand 2" evidence="2">
    <location>
        <begin position="100"/>
        <end position="135"/>
    </location>
</feature>
<feature type="domain" description="EF-hand 3" evidence="3">
    <location>
        <begin position="136"/>
        <end position="171"/>
    </location>
</feature>
<feature type="region of interest" description="Disordered" evidence="4">
    <location>
        <begin position="177"/>
        <end position="197"/>
    </location>
</feature>
<feature type="compositionally biased region" description="Basic and acidic residues" evidence="4">
    <location>
        <begin position="177"/>
        <end position="188"/>
    </location>
</feature>
<feature type="binding site" evidence="5">
    <location>
        <position position="58"/>
    </location>
    <ligand>
        <name>Ca(2+)</name>
        <dbReference type="ChEBI" id="CHEBI:29108"/>
        <label>1</label>
    </ligand>
</feature>
<feature type="binding site" evidence="5">
    <location>
        <position position="69"/>
    </location>
    <ligand>
        <name>Ca(2+)</name>
        <dbReference type="ChEBI" id="CHEBI:29108"/>
        <label>1</label>
    </ligand>
</feature>
<feature type="binding site" evidence="5">
    <location>
        <position position="149"/>
    </location>
    <ligand>
        <name>Ca(2+)</name>
        <dbReference type="ChEBI" id="CHEBI:29108"/>
        <label>2</label>
    </ligand>
</feature>
<feature type="binding site" evidence="5">
    <location>
        <position position="153"/>
    </location>
    <ligand>
        <name>Ca(2+)</name>
        <dbReference type="ChEBI" id="CHEBI:29108"/>
        <label>2</label>
    </ligand>
</feature>
<feature type="binding site" evidence="5">
    <location>
        <position position="155"/>
    </location>
    <ligand>
        <name>Ca(2+)</name>
        <dbReference type="ChEBI" id="CHEBI:29108"/>
        <label>2</label>
    </ligand>
</feature>
<feature type="binding site" evidence="5">
    <location>
        <position position="160"/>
    </location>
    <ligand>
        <name>Ca(2+)</name>
        <dbReference type="ChEBI" id="CHEBI:29108"/>
        <label>2</label>
    </ligand>
</feature>
<name>EFCB9_HUMAN</name>
<sequence>MRLKQGSFLWYLYLDKIYCLLSVRNVKALAEYFHILDVHGKNTLNDVLFYHFLHHVTDLKKAQINIVFDMLDWNAVGEIDFEKFYMLVCMLLAHQNHLEGQFMYRHSRPVFDLLDLKGDLRIGAKNFEMYRFLFNIQKQELKDLFRDFDITGDNRLNYQEFKLYTIIYTDKLQKRQKTEEKEKGERKRSLYSKCHIK</sequence>
<comment type="function">
    <text evidence="2">Auxiliary component of the CatSper complex, a complex involved in sperm cell hyperactivation. pH-dependent Ca(2+) sensor required to activate the CatSper channel. Sperm cell hyperactivation is needed for sperm motility which is essential late in the preparation of sperm for fertilization. Associates with the CatSper complex via direct interaction with CATSPERZ, and senses intracellular Ca(2+). Together with CATSPERZ, associates with the CatSper channel pore and is required for the two-row structure of each single CatSper channel.</text>
</comment>
<comment type="subunit">
    <text evidence="1 2">Component of the CatSper complex or CatSpermasome composed of the core pore-forming members CATSPER1, CATSPER2, CATSPER3 and CATSPER4 as well as auxiliary members CATSPERB, CATSPERG, CATSPERD, CATSPERE, CATSPERZ, C2CD6/CATSPERT, TMEM249, TMEM262 and EFCAB9 (By similarity). HSPA1 may be an additional auxiliary complex member (By similarity). The core complex members CATSPER1, CATSPER2, CATSPER3 and CATSPER4 form a heterotetrameric channel (By similarity). The auxiliary CATSPERB, CATSPERG, CATSPERD and CATSPERE subunits form a pavilion-like structure over the pore which stabilizes the complex through interactions with CATSPER4, CATSPER3, CATSPER1 and CATSPER2 respectively (By similarity). TMEM262/CATSPERH interacts with CATSPERB, further stabilizing the complex. C2CD6/CATSPERT interacts at least with CATSPERD and is required for targeting the CatSper complex in the flagellar membrane (By similarity). Interacts with CATSPERZ; the interaction is direct, Ca(2+)-dependent and connects EFCAB9 with the CatSper complex (By similarity). Dissociates from CATSPERZ at elevated pH (By similarity).</text>
</comment>
<comment type="subcellular location">
    <subcellularLocation>
        <location evidence="2">Cytoplasm</location>
    </subcellularLocation>
    <subcellularLocation>
        <location evidence="2">Cell projection</location>
        <location evidence="2">Cilium</location>
        <location evidence="2">Flagellum</location>
    </subcellularLocation>
    <text evidence="2">Localizes to the principal piece of the sperm tail.</text>
</comment>
<comment type="caution">
    <text evidence="5">In mouse, Slco6c1 is an additional auxiliary subunit of the CatSper complex. It is unclear if the related SLCO6A1 protein performs the same role in non-rodent species.</text>
</comment>
<protein>
    <recommendedName>
        <fullName evidence="5">EF-hand calcium-binding domain-containing protein 9</fullName>
    </recommendedName>
</protein>
<dbReference type="EMBL" id="AC024561">
    <property type="status" value="NOT_ANNOTATED_CDS"/>
    <property type="molecule type" value="Genomic_DNA"/>
</dbReference>
<dbReference type="CCDS" id="CCDS54946.1"/>
<dbReference type="RefSeq" id="NP_001164654.1">
    <property type="nucleotide sequence ID" value="NM_001171183.2"/>
</dbReference>
<dbReference type="SMR" id="A8MZ26"/>
<dbReference type="ComplexPortal" id="CPX-9165">
    <property type="entry name" value="CatSpermasome complex"/>
</dbReference>
<dbReference type="FunCoup" id="A8MZ26">
    <property type="interactions" value="1"/>
</dbReference>
<dbReference type="STRING" id="9606.ENSP00000381247"/>
<dbReference type="TCDB" id="1.A.1.19.1">
    <property type="family name" value="the voltage-gated ion channel (vic) superfamily"/>
</dbReference>
<dbReference type="iPTMnet" id="A8MZ26"/>
<dbReference type="PhosphoSitePlus" id="A8MZ26"/>
<dbReference type="BioMuta" id="EFCAB9"/>
<dbReference type="jPOST" id="A8MZ26"/>
<dbReference type="MassIVE" id="A8MZ26"/>
<dbReference type="PaxDb" id="9606-ENSP00000381247"/>
<dbReference type="PeptideAtlas" id="A8MZ26"/>
<dbReference type="ProteomicsDB" id="2449"/>
<dbReference type="DNASU" id="285588"/>
<dbReference type="Ensembl" id="ENST00000398186.5">
    <property type="protein sequence ID" value="ENSP00000381247.4"/>
    <property type="gene ID" value="ENSG00000214360.5"/>
</dbReference>
<dbReference type="GeneID" id="285588"/>
<dbReference type="KEGG" id="hsa:285588"/>
<dbReference type="MANE-Select" id="ENST00000398186.5">
    <property type="protein sequence ID" value="ENSP00000381247.4"/>
    <property type="RefSeq nucleotide sequence ID" value="NM_001171183.2"/>
    <property type="RefSeq protein sequence ID" value="NP_001164654.1"/>
</dbReference>
<dbReference type="UCSC" id="uc021yhr.2">
    <property type="organism name" value="human"/>
</dbReference>
<dbReference type="AGR" id="HGNC:34530"/>
<dbReference type="CTD" id="285588"/>
<dbReference type="DisGeNET" id="285588"/>
<dbReference type="GeneCards" id="EFCAB9"/>
<dbReference type="HGNC" id="HGNC:34530">
    <property type="gene designation" value="EFCAB9"/>
</dbReference>
<dbReference type="HPA" id="ENSG00000214360">
    <property type="expression patterns" value="Tissue enriched (testis)"/>
</dbReference>
<dbReference type="MIM" id="618520">
    <property type="type" value="gene"/>
</dbReference>
<dbReference type="neXtProt" id="NX_A8MZ26"/>
<dbReference type="PharmGKB" id="PA164718963"/>
<dbReference type="VEuPathDB" id="HostDB:ENSG00000214360"/>
<dbReference type="eggNOG" id="KOG0027">
    <property type="taxonomic scope" value="Eukaryota"/>
</dbReference>
<dbReference type="GeneTree" id="ENSGT00390000007501"/>
<dbReference type="HOGENOM" id="CLU_106342_0_0_1"/>
<dbReference type="InParanoid" id="A8MZ26"/>
<dbReference type="OMA" id="FEMYRFL"/>
<dbReference type="OrthoDB" id="186625at2759"/>
<dbReference type="PAN-GO" id="A8MZ26">
    <property type="GO annotations" value="5 GO annotations based on evolutionary models"/>
</dbReference>
<dbReference type="PhylomeDB" id="A8MZ26"/>
<dbReference type="TreeFam" id="TF328944"/>
<dbReference type="PathwayCommons" id="A8MZ26"/>
<dbReference type="SignaLink" id="A8MZ26"/>
<dbReference type="BioGRID-ORCS" id="285588">
    <property type="hits" value="13 hits in 1136 CRISPR screens"/>
</dbReference>
<dbReference type="ChiTaRS" id="EFCAB9">
    <property type="organism name" value="human"/>
</dbReference>
<dbReference type="GenomeRNAi" id="285588"/>
<dbReference type="Pharos" id="A8MZ26">
    <property type="development level" value="Tdark"/>
</dbReference>
<dbReference type="PRO" id="PR:A8MZ26"/>
<dbReference type="Proteomes" id="UP000005640">
    <property type="component" value="Chromosome 5"/>
</dbReference>
<dbReference type="RNAct" id="A8MZ26">
    <property type="molecule type" value="protein"/>
</dbReference>
<dbReference type="Bgee" id="ENSG00000214360">
    <property type="expression patterns" value="Expressed in male germ line stem cell (sensu Vertebrata) in testis and 36 other cell types or tissues"/>
</dbReference>
<dbReference type="GO" id="GO:0036128">
    <property type="term" value="C:CatSper complex"/>
    <property type="evidence" value="ECO:0000250"/>
    <property type="project" value="UniProtKB"/>
</dbReference>
<dbReference type="GO" id="GO:0005737">
    <property type="term" value="C:cytoplasm"/>
    <property type="evidence" value="ECO:0000250"/>
    <property type="project" value="UniProtKB"/>
</dbReference>
<dbReference type="GO" id="GO:0097228">
    <property type="term" value="C:sperm principal piece"/>
    <property type="evidence" value="ECO:0000250"/>
    <property type="project" value="UniProtKB"/>
</dbReference>
<dbReference type="GO" id="GO:0005509">
    <property type="term" value="F:calcium ion binding"/>
    <property type="evidence" value="ECO:0000250"/>
    <property type="project" value="UniProtKB"/>
</dbReference>
<dbReference type="GO" id="GO:0061891">
    <property type="term" value="F:calcium ion sensor activity"/>
    <property type="evidence" value="ECO:0000250"/>
    <property type="project" value="UniProtKB"/>
</dbReference>
<dbReference type="GO" id="GO:0030317">
    <property type="term" value="P:flagellated sperm motility"/>
    <property type="evidence" value="ECO:0000250"/>
    <property type="project" value="UniProtKB"/>
</dbReference>
<dbReference type="GO" id="GO:0048240">
    <property type="term" value="P:sperm capacitation"/>
    <property type="evidence" value="ECO:0000250"/>
    <property type="project" value="UniProtKB"/>
</dbReference>
<dbReference type="GO" id="GO:0007283">
    <property type="term" value="P:spermatogenesis"/>
    <property type="evidence" value="ECO:0000250"/>
    <property type="project" value="UniProtKB"/>
</dbReference>
<dbReference type="Gene3D" id="1.10.238.10">
    <property type="entry name" value="EF-hand"/>
    <property type="match status" value="1"/>
</dbReference>
<dbReference type="InterPro" id="IPR011992">
    <property type="entry name" value="EF-hand-dom_pair"/>
</dbReference>
<dbReference type="InterPro" id="IPR002048">
    <property type="entry name" value="EF_hand_dom"/>
</dbReference>
<dbReference type="InterPro" id="IPR042798">
    <property type="entry name" value="EFCAB9"/>
</dbReference>
<dbReference type="PANTHER" id="PTHR47065">
    <property type="entry name" value="EF-HAND CALCIUM-BINDING DOMAIN-CONTAINING PROTEIN 9"/>
    <property type="match status" value="1"/>
</dbReference>
<dbReference type="PANTHER" id="PTHR47065:SF1">
    <property type="entry name" value="EF-HAND CALCIUM-BINDING DOMAIN-CONTAINING PROTEIN 9"/>
    <property type="match status" value="1"/>
</dbReference>
<dbReference type="Pfam" id="PF13499">
    <property type="entry name" value="EF-hand_7"/>
    <property type="match status" value="1"/>
</dbReference>
<dbReference type="SUPFAM" id="SSF47473">
    <property type="entry name" value="EF-hand"/>
    <property type="match status" value="1"/>
</dbReference>
<dbReference type="PROSITE" id="PS50222">
    <property type="entry name" value="EF_HAND_2"/>
    <property type="match status" value="2"/>
</dbReference>
<keyword id="KW-0106">Calcium</keyword>
<keyword id="KW-0966">Cell projection</keyword>
<keyword id="KW-0969">Cilium</keyword>
<keyword id="KW-0963">Cytoplasm</keyword>
<keyword id="KW-0282">Flagellum</keyword>
<keyword id="KW-0479">Metal-binding</keyword>
<keyword id="KW-1267">Proteomics identification</keyword>
<keyword id="KW-1185">Reference proteome</keyword>
<keyword id="KW-0677">Repeat</keyword>
<evidence type="ECO:0000250" key="1">
    <source>
        <dbReference type="UniProtKB" id="Q91ZR5"/>
    </source>
</evidence>
<evidence type="ECO:0000250" key="2">
    <source>
        <dbReference type="UniProtKB" id="Q9DAM2"/>
    </source>
</evidence>
<evidence type="ECO:0000255" key="3">
    <source>
        <dbReference type="PROSITE-ProRule" id="PRU00448"/>
    </source>
</evidence>
<evidence type="ECO:0000256" key="4">
    <source>
        <dbReference type="SAM" id="MobiDB-lite"/>
    </source>
</evidence>
<evidence type="ECO:0000305" key="5"/>
<evidence type="ECO:0000312" key="6">
    <source>
        <dbReference type="HGNC" id="HGNC:34530"/>
    </source>
</evidence>
<accession>A8MZ26</accession>
<organism>
    <name type="scientific">Homo sapiens</name>
    <name type="common">Human</name>
    <dbReference type="NCBI Taxonomy" id="9606"/>
    <lineage>
        <taxon>Eukaryota</taxon>
        <taxon>Metazoa</taxon>
        <taxon>Chordata</taxon>
        <taxon>Craniata</taxon>
        <taxon>Vertebrata</taxon>
        <taxon>Euteleostomi</taxon>
        <taxon>Mammalia</taxon>
        <taxon>Eutheria</taxon>
        <taxon>Euarchontoglires</taxon>
        <taxon>Primates</taxon>
        <taxon>Haplorrhini</taxon>
        <taxon>Catarrhini</taxon>
        <taxon>Hominidae</taxon>
        <taxon>Homo</taxon>
    </lineage>
</organism>
<proteinExistence type="evidence at protein level"/>